<name>I3B3_CONCB</name>
<keyword id="KW-1015">Disulfide bond</keyword>
<keyword id="KW-0964">Secreted</keyword>
<keyword id="KW-0732">Signal</keyword>
<keyword id="KW-0800">Toxin</keyword>
<organism>
    <name type="scientific">Conus caracteristicus</name>
    <name type="common">Characteristic cone</name>
    <dbReference type="NCBI Taxonomy" id="89440"/>
    <lineage>
        <taxon>Eukaryota</taxon>
        <taxon>Metazoa</taxon>
        <taxon>Spiralia</taxon>
        <taxon>Lophotrochozoa</taxon>
        <taxon>Mollusca</taxon>
        <taxon>Gastropoda</taxon>
        <taxon>Caenogastropoda</taxon>
        <taxon>Neogastropoda</taxon>
        <taxon>Conoidea</taxon>
        <taxon>Conidae</taxon>
        <taxon>Conus</taxon>
    </lineage>
</organism>
<dbReference type="EMBL" id="FJ531696">
    <property type="protein sequence ID" value="ACU30042.1"/>
    <property type="molecule type" value="mRNA"/>
</dbReference>
<dbReference type="SMR" id="D2DGD5"/>
<dbReference type="GO" id="GO:0005576">
    <property type="term" value="C:extracellular region"/>
    <property type="evidence" value="ECO:0007669"/>
    <property type="project" value="UniProtKB-SubCell"/>
</dbReference>
<dbReference type="GO" id="GO:0008200">
    <property type="term" value="F:ion channel inhibitor activity"/>
    <property type="evidence" value="ECO:0007669"/>
    <property type="project" value="InterPro"/>
</dbReference>
<dbReference type="GO" id="GO:0090729">
    <property type="term" value="F:toxin activity"/>
    <property type="evidence" value="ECO:0007669"/>
    <property type="project" value="UniProtKB-KW"/>
</dbReference>
<dbReference type="InterPro" id="IPR004214">
    <property type="entry name" value="Conotoxin"/>
</dbReference>
<dbReference type="Pfam" id="PF02950">
    <property type="entry name" value="Conotoxin"/>
    <property type="match status" value="1"/>
</dbReference>
<feature type="signal peptide" evidence="2">
    <location>
        <begin position="1"/>
        <end position="19"/>
    </location>
</feature>
<feature type="propeptide" id="PRO_0000392154" evidence="2">
    <location>
        <begin position="20"/>
        <end position="42"/>
    </location>
</feature>
<feature type="peptide" id="PRO_0000392155" description="Conotoxin Ca11.3">
    <location>
        <begin position="43"/>
        <end position="80"/>
    </location>
</feature>
<feature type="disulfide bond" evidence="1">
    <location>
        <begin position="46"/>
        <end position="60"/>
    </location>
</feature>
<feature type="disulfide bond" evidence="1">
    <location>
        <begin position="53"/>
        <end position="65"/>
    </location>
</feature>
<feature type="disulfide bond" evidence="1">
    <location>
        <begin position="59"/>
        <end position="72"/>
    </location>
</feature>
<feature type="disulfide bond" evidence="1">
    <location>
        <begin position="64"/>
        <end position="79"/>
    </location>
</feature>
<accession>D2DGD5</accession>
<reference key="1">
    <citation type="journal article" date="2009" name="Peptides">
        <title>New conotoxins define the novel I3-superfamily.</title>
        <authorList>
            <person name="Yuan D.D."/>
            <person name="Liu L."/>
            <person name="Shao X.X."/>
            <person name="Peng C."/>
            <person name="Chi C.W."/>
            <person name="Guo Z.Y."/>
        </authorList>
    </citation>
    <scope>NUCLEOTIDE SEQUENCE [MRNA]</scope>
</reference>
<comment type="subcellular location">
    <subcellularLocation>
        <location evidence="4">Secreted</location>
    </subcellularLocation>
</comment>
<comment type="tissue specificity">
    <text evidence="4">Expressed by the venom duct.</text>
</comment>
<comment type="domain">
    <text evidence="3">The cysteine framework is XI (C-C-CC-CC-C-C).</text>
</comment>
<comment type="similarity">
    <text evidence="3">Belongs to the conotoxin I3 superfamily.</text>
</comment>
<protein>
    <recommendedName>
        <fullName>Conotoxin Ca11.3</fullName>
    </recommendedName>
</protein>
<evidence type="ECO:0000250" key="1">
    <source>
        <dbReference type="UniProtKB" id="Q7Z094"/>
    </source>
</evidence>
<evidence type="ECO:0000255" key="2"/>
<evidence type="ECO:0000305" key="3"/>
<evidence type="ECO:0000305" key="4">
    <source>
    </source>
</evidence>
<proteinExistence type="inferred from homology"/>
<sequence>MKLVLAIVVILMLLSLSTGAEMSDNHASRSATALRDRLLSPKASICYGTGGRCTKDKHCCGWLCCGGPSVGCVVSVAPCK</sequence>